<reference key="1">
    <citation type="journal article" date="1990" name="J. Bacteriol.">
        <title>Molecular characterization of an Enterobacter cloacae gene (romA) which pleiotropically inhibits the expression of Escherichia coli outer membrane proteins.</title>
        <authorList>
            <person name="Komatsu T."/>
            <person name="Ohta M."/>
            <person name="Kido N."/>
            <person name="Arakawa Y."/>
            <person name="Ito H."/>
            <person name="Mizuno T."/>
            <person name="Kato N."/>
        </authorList>
    </citation>
    <scope>NUCLEOTIDE SEQUENCE [GENOMIC DNA]</scope>
</reference>
<reference key="2">
    <citation type="journal article" date="1995" name="Microbiology">
        <title>Multidrug resistance in Klebsiella pneumoniae: a novel gene, ramA, confers a multidrug resistance phenotype in Escherichia coli.</title>
        <authorList>
            <person name="George A.M."/>
            <person name="Hall R.M."/>
            <person name="Stokes H.W."/>
        </authorList>
    </citation>
    <scope>IDENTIFICATION</scope>
</reference>
<feature type="chain" id="PRO_0000194549" description="Transcriptional activator RamA">
    <location>
        <begin position="1"/>
        <end position="113"/>
    </location>
</feature>
<feature type="domain" description="HTH araC/xylS-type" evidence="1">
    <location>
        <begin position="9"/>
        <end position="107"/>
    </location>
</feature>
<feature type="DNA-binding region" description="H-T-H motif" evidence="1">
    <location>
        <begin position="26"/>
        <end position="47"/>
    </location>
</feature>
<feature type="DNA-binding region" description="H-T-H motif" evidence="1">
    <location>
        <begin position="74"/>
        <end position="97"/>
    </location>
</feature>
<comment type="function">
    <text>Probable transcriptional activator.</text>
</comment>
<sequence>MTISAQVIDTIVEWIDDNLHQPLRIEDIARHAGYSKWHLQRLFLQYKGESLGRYIRERKLLLAARDLRESDERVYEICLRYGFESQQTFTRIFTRTFHQPPGAYRKENHSRTH</sequence>
<gene>
    <name type="primary">ramA</name>
</gene>
<organism>
    <name type="scientific">Enterobacter cloacae</name>
    <dbReference type="NCBI Taxonomy" id="550"/>
    <lineage>
        <taxon>Bacteria</taxon>
        <taxon>Pseudomonadati</taxon>
        <taxon>Pseudomonadota</taxon>
        <taxon>Gammaproteobacteria</taxon>
        <taxon>Enterobacterales</taxon>
        <taxon>Enterobacteriaceae</taxon>
        <taxon>Enterobacter</taxon>
        <taxon>Enterobacter cloacae complex</taxon>
    </lineage>
</organism>
<accession>P55922</accession>
<proteinExistence type="predicted"/>
<dbReference type="SMR" id="P55922"/>
<dbReference type="eggNOG" id="COG2207">
    <property type="taxonomic scope" value="Bacteria"/>
</dbReference>
<dbReference type="GO" id="GO:0003700">
    <property type="term" value="F:DNA-binding transcription factor activity"/>
    <property type="evidence" value="ECO:0007669"/>
    <property type="project" value="InterPro"/>
</dbReference>
<dbReference type="GO" id="GO:0043565">
    <property type="term" value="F:sequence-specific DNA binding"/>
    <property type="evidence" value="ECO:0007669"/>
    <property type="project" value="InterPro"/>
</dbReference>
<dbReference type="Gene3D" id="1.10.10.60">
    <property type="entry name" value="Homeodomain-like"/>
    <property type="match status" value="2"/>
</dbReference>
<dbReference type="InterPro" id="IPR009057">
    <property type="entry name" value="Homeodomain-like_sf"/>
</dbReference>
<dbReference type="InterPro" id="IPR018060">
    <property type="entry name" value="HTH_AraC"/>
</dbReference>
<dbReference type="InterPro" id="IPR050959">
    <property type="entry name" value="MarA-like"/>
</dbReference>
<dbReference type="InterPro" id="IPR020449">
    <property type="entry name" value="Tscrpt_reg_AraC-type_HTH"/>
</dbReference>
<dbReference type="NCBIfam" id="NF012144">
    <property type="entry name" value="ramA_TF"/>
    <property type="match status" value="1"/>
</dbReference>
<dbReference type="PANTHER" id="PTHR47504:SF2">
    <property type="entry name" value="REGULATORY PROTEIN SOXS"/>
    <property type="match status" value="1"/>
</dbReference>
<dbReference type="PANTHER" id="PTHR47504">
    <property type="entry name" value="RIGHT ORIGIN-BINDING PROTEIN"/>
    <property type="match status" value="1"/>
</dbReference>
<dbReference type="Pfam" id="PF12833">
    <property type="entry name" value="HTH_18"/>
    <property type="match status" value="1"/>
</dbReference>
<dbReference type="PRINTS" id="PR00032">
    <property type="entry name" value="HTHARAC"/>
</dbReference>
<dbReference type="SMART" id="SM00342">
    <property type="entry name" value="HTH_ARAC"/>
    <property type="match status" value="1"/>
</dbReference>
<dbReference type="SUPFAM" id="SSF46689">
    <property type="entry name" value="Homeodomain-like"/>
    <property type="match status" value="2"/>
</dbReference>
<dbReference type="PROSITE" id="PS01124">
    <property type="entry name" value="HTH_ARAC_FAMILY_2"/>
    <property type="match status" value="1"/>
</dbReference>
<evidence type="ECO:0000255" key="1">
    <source>
        <dbReference type="PROSITE-ProRule" id="PRU00593"/>
    </source>
</evidence>
<protein>
    <recommendedName>
        <fullName>Transcriptional activator RamA</fullName>
    </recommendedName>
</protein>
<keyword id="KW-0010">Activator</keyword>
<keyword id="KW-0238">DNA-binding</keyword>
<keyword id="KW-0804">Transcription</keyword>
<keyword id="KW-0805">Transcription regulation</keyword>
<name>RAMA_ENTCL</name>